<sequence length="706" mass="78095">MRLAIRALLACAVLGLCLAEQTVRWCTVSNHEVSKCASFRDSMKSIVPAPPLVACVKRTSYLECIKAIADNEADAVTLDAGLVFEAGLSPYNLKPVVAEFYGSKTEPQTHYYAVAVVKKNSNFQLNQLQGKKSCHTGLGRSAGWNIPIGLLYWQLPEPRESLQKAVSNFFAGSCVPCADRTAVPNLCQLCVGKGTDKCACSNHEPYFGYSGAFKCLADGAGDVAFVKHSTVLENLPQEADRDEYQLLCRDNTRKSVDEYKDCYLASIPSHAVVARSVDGKEDLIWGLLNQAQEHFGTEKSKDFHLFSSPHGKDLLFKDSALGFLRIPPAMDTWLYLGYEYVTAIRNLREDIRPEVPKDECKKVKWCAIGHHEKVKCDEWSVNSGGNIECESAQSTEDCIAKIVKGEADAMSLDGGFIYIAGKCGLVPVLAENYETRSGSACVDTPEEGYHAVAVVKSSSDPDLTWNSLKGKKSCHTGVDRTAGWNIPMGLLYSEIKHCEFDKFFREGCAPGYRRNSTLCNLCIGSASGPGRECEPNNHERYYGYTGAFRCLVEKGDVAFVKHQTVEQNTDGRNPDDWAKDLKSENFKLLCPDGTRKSVTEFKSCYLARAPNHAVVSRKEKAACVCQELHNQQASYGKNGSHCPDKFCLFQSATKDLLFRDDTQCLANLQPTTTYKTYLGEKYLTAVANLRQCSTSRLLEACTFHRV</sequence>
<accession>P27425</accession>
<reference key="1">
    <citation type="journal article" date="1993" name="Biochim. Biophys. Acta">
        <title>The cDNA sequence of horse transferrin.</title>
        <authorList>
            <person name="Carpenter M.A."/>
            <person name="Broad T.E."/>
        </authorList>
    </citation>
    <scope>NUCLEOTIDE SEQUENCE [MRNA]</scope>
</reference>
<reference key="2">
    <citation type="submission" date="1995-03" db="EMBL/GenBank/DDBJ databases">
        <authorList>
            <person name="McDowell K.J."/>
            <person name="Adams M.H."/>
            <person name="Baker C.B."/>
        </authorList>
    </citation>
    <scope>NUCLEOTIDE SEQUENCE [MRNA]</scope>
    <source>
        <tissue>Extraembryonic tissue</tissue>
    </source>
</reference>
<name>TRFE_HORSE</name>
<organism>
    <name type="scientific">Equus caballus</name>
    <name type="common">Horse</name>
    <dbReference type="NCBI Taxonomy" id="9796"/>
    <lineage>
        <taxon>Eukaryota</taxon>
        <taxon>Metazoa</taxon>
        <taxon>Chordata</taxon>
        <taxon>Craniata</taxon>
        <taxon>Vertebrata</taxon>
        <taxon>Euteleostomi</taxon>
        <taxon>Mammalia</taxon>
        <taxon>Eutheria</taxon>
        <taxon>Laurasiatheria</taxon>
        <taxon>Perissodactyla</taxon>
        <taxon>Equidae</taxon>
        <taxon>Equus</taxon>
    </lineage>
</organism>
<proteinExistence type="evidence at transcript level"/>
<gene>
    <name type="primary">TF</name>
</gene>
<comment type="function">
    <text>Transferrins are iron binding transport proteins which can bind two Fe(3+) ions in association with the binding of an anion, usually bicarbonate. It is responsible for the transport of iron from sites of absorption and heme degradation to those of storage and utilization. Serum transferrin may also have a further role in stimulating cell proliferation.</text>
</comment>
<comment type="subunit">
    <text evidence="2">Monomer. Part of a complex composed of SLC40A1/ferroportin, TF/transferrin and HEPH/hephaestin that transfers iron from cells to transferrin.</text>
</comment>
<comment type="subcellular location">
    <subcellularLocation>
        <location>Secreted</location>
    </subcellularLocation>
</comment>
<comment type="tissue specificity">
    <text>Expressed by the liver and secreted in plasma.</text>
</comment>
<comment type="similarity">
    <text evidence="5">Belongs to the transferrin family.</text>
</comment>
<evidence type="ECO:0000250" key="1"/>
<evidence type="ECO:0000250" key="2">
    <source>
        <dbReference type="UniProtKB" id="P02787"/>
    </source>
</evidence>
<evidence type="ECO:0000250" key="3">
    <source>
        <dbReference type="UniProtKB" id="P12346"/>
    </source>
</evidence>
<evidence type="ECO:0000255" key="4"/>
<evidence type="ECO:0000255" key="5">
    <source>
        <dbReference type="PROSITE-ProRule" id="PRU00741"/>
    </source>
</evidence>
<keyword id="KW-1015">Disulfide bond</keyword>
<keyword id="KW-0325">Glycoprotein</keyword>
<keyword id="KW-0406">Ion transport</keyword>
<keyword id="KW-0408">Iron</keyword>
<keyword id="KW-0410">Iron transport</keyword>
<keyword id="KW-0479">Metal-binding</keyword>
<keyword id="KW-0488">Methylation</keyword>
<keyword id="KW-0597">Phosphoprotein</keyword>
<keyword id="KW-1185">Reference proteome</keyword>
<keyword id="KW-0677">Repeat</keyword>
<keyword id="KW-0964">Secreted</keyword>
<keyword id="KW-0732">Signal</keyword>
<keyword id="KW-0813">Transport</keyword>
<protein>
    <recommendedName>
        <fullName>Serotransferrin</fullName>
        <shortName>Transferrin</shortName>
    </recommendedName>
    <alternativeName>
        <fullName>Beta-1 metal-binding globulin</fullName>
    </alternativeName>
    <alternativeName>
        <fullName>Siderophilin</fullName>
    </alternativeName>
</protein>
<dbReference type="EMBL" id="M69020">
    <property type="protein sequence ID" value="AAA30958.1"/>
    <property type="molecule type" value="mRNA"/>
</dbReference>
<dbReference type="EMBL" id="U21127">
    <property type="protein sequence ID" value="AAA63684.1"/>
    <property type="molecule type" value="mRNA"/>
</dbReference>
<dbReference type="PIR" id="S33761">
    <property type="entry name" value="S33761"/>
</dbReference>
<dbReference type="RefSeq" id="NP_001075415.2">
    <property type="nucleotide sequence ID" value="NM_001081946.2"/>
</dbReference>
<dbReference type="SMR" id="P27425"/>
<dbReference type="FunCoup" id="P27425">
    <property type="interactions" value="712"/>
</dbReference>
<dbReference type="STRING" id="9796.ENSECAP00000050263"/>
<dbReference type="MEROPS" id="S60.970"/>
<dbReference type="GlyCosmos" id="P27425">
    <property type="glycosylation" value="1 site, No reported glycans"/>
</dbReference>
<dbReference type="PaxDb" id="9796-ENSECAP00000050263"/>
<dbReference type="PeptideAtlas" id="P27425"/>
<dbReference type="GeneID" id="100034176"/>
<dbReference type="KEGG" id="ecb:100034176"/>
<dbReference type="CTD" id="7018"/>
<dbReference type="InParanoid" id="P27425"/>
<dbReference type="OrthoDB" id="41266at2759"/>
<dbReference type="Proteomes" id="UP000002281">
    <property type="component" value="Unplaced"/>
</dbReference>
<dbReference type="GO" id="GO:0005769">
    <property type="term" value="C:early endosome"/>
    <property type="evidence" value="ECO:0000318"/>
    <property type="project" value="GO_Central"/>
</dbReference>
<dbReference type="GO" id="GO:0005615">
    <property type="term" value="C:extracellular space"/>
    <property type="evidence" value="ECO:0000318"/>
    <property type="project" value="GO_Central"/>
</dbReference>
<dbReference type="GO" id="GO:0005886">
    <property type="term" value="C:plasma membrane"/>
    <property type="evidence" value="ECO:0000318"/>
    <property type="project" value="GO_Central"/>
</dbReference>
<dbReference type="GO" id="GO:0055037">
    <property type="term" value="C:recycling endosome"/>
    <property type="evidence" value="ECO:0000318"/>
    <property type="project" value="GO_Central"/>
</dbReference>
<dbReference type="GO" id="GO:0008199">
    <property type="term" value="F:ferric iron binding"/>
    <property type="evidence" value="ECO:0007669"/>
    <property type="project" value="InterPro"/>
</dbReference>
<dbReference type="GO" id="GO:0019731">
    <property type="term" value="P:antibacterial humoral response"/>
    <property type="evidence" value="ECO:0000318"/>
    <property type="project" value="GO_Central"/>
</dbReference>
<dbReference type="GO" id="GO:0006879">
    <property type="term" value="P:intracellular iron ion homeostasis"/>
    <property type="evidence" value="ECO:0007669"/>
    <property type="project" value="InterPro"/>
</dbReference>
<dbReference type="GO" id="GO:0006826">
    <property type="term" value="P:iron ion transport"/>
    <property type="evidence" value="ECO:0000318"/>
    <property type="project" value="GO_Central"/>
</dbReference>
<dbReference type="CDD" id="cd13617">
    <property type="entry name" value="PBP2_transferrin_C"/>
    <property type="match status" value="1"/>
</dbReference>
<dbReference type="CDD" id="cd13618">
    <property type="entry name" value="PBP2_transferrin_N"/>
    <property type="match status" value="1"/>
</dbReference>
<dbReference type="FunFam" id="3.40.190.10:FF:000095">
    <property type="entry name" value="Lactotransferrin"/>
    <property type="match status" value="1"/>
</dbReference>
<dbReference type="FunFam" id="3.40.190.10:FF:000105">
    <property type="entry name" value="Serotransferrin"/>
    <property type="match status" value="1"/>
</dbReference>
<dbReference type="Gene3D" id="3.40.190.10">
    <property type="entry name" value="Periplasmic binding protein-like II"/>
    <property type="match status" value="4"/>
</dbReference>
<dbReference type="InterPro" id="IPR030685">
    <property type="entry name" value="Serotransferrin_mammal"/>
</dbReference>
<dbReference type="InterPro" id="IPR016357">
    <property type="entry name" value="Transferrin"/>
</dbReference>
<dbReference type="InterPro" id="IPR001156">
    <property type="entry name" value="Transferrin-like_dom"/>
</dbReference>
<dbReference type="InterPro" id="IPR018195">
    <property type="entry name" value="Transferrin_Fe_BS"/>
</dbReference>
<dbReference type="PANTHER" id="PTHR11485:SF31">
    <property type="entry name" value="SEROTRANSFERRIN"/>
    <property type="match status" value="1"/>
</dbReference>
<dbReference type="PANTHER" id="PTHR11485">
    <property type="entry name" value="TRANSFERRIN"/>
    <property type="match status" value="1"/>
</dbReference>
<dbReference type="Pfam" id="PF00405">
    <property type="entry name" value="Transferrin"/>
    <property type="match status" value="2"/>
</dbReference>
<dbReference type="PIRSF" id="PIRSF500682">
    <property type="entry name" value="Serotransferrin"/>
    <property type="match status" value="1"/>
</dbReference>
<dbReference type="PIRSF" id="PIRSF002549">
    <property type="entry name" value="Transferrin"/>
    <property type="match status" value="1"/>
</dbReference>
<dbReference type="PRINTS" id="PR00422">
    <property type="entry name" value="TRANSFERRIN"/>
</dbReference>
<dbReference type="SMART" id="SM00094">
    <property type="entry name" value="TR_FER"/>
    <property type="match status" value="2"/>
</dbReference>
<dbReference type="SUPFAM" id="SSF53850">
    <property type="entry name" value="Periplasmic binding protein-like II"/>
    <property type="match status" value="2"/>
</dbReference>
<dbReference type="PROSITE" id="PS00205">
    <property type="entry name" value="TRANSFERRIN_LIKE_1"/>
    <property type="match status" value="2"/>
</dbReference>
<dbReference type="PROSITE" id="PS00206">
    <property type="entry name" value="TRANSFERRIN_LIKE_2"/>
    <property type="match status" value="2"/>
</dbReference>
<dbReference type="PROSITE" id="PS00207">
    <property type="entry name" value="TRANSFERRIN_LIKE_3"/>
    <property type="match status" value="2"/>
</dbReference>
<dbReference type="PROSITE" id="PS51408">
    <property type="entry name" value="TRANSFERRIN_LIKE_4"/>
    <property type="match status" value="2"/>
</dbReference>
<feature type="signal peptide" evidence="1">
    <location>
        <begin position="1"/>
        <end position="19"/>
    </location>
</feature>
<feature type="chain" id="PRO_0000035714" description="Serotransferrin">
    <location>
        <begin position="20"/>
        <end position="706"/>
    </location>
</feature>
<feature type="domain" description="Transferrin-like 1" evidence="5">
    <location>
        <begin position="23"/>
        <end position="349"/>
    </location>
</feature>
<feature type="domain" description="Transferrin-like 2" evidence="5">
    <location>
        <begin position="363"/>
        <end position="691"/>
    </location>
</feature>
<feature type="binding site" evidence="5">
    <location>
        <position position="79"/>
    </location>
    <ligand>
        <name>Fe(3+)</name>
        <dbReference type="ChEBI" id="CHEBI:29034"/>
        <label>1</label>
    </ligand>
</feature>
<feature type="binding site" evidence="5">
    <location>
        <position position="111"/>
    </location>
    <ligand>
        <name>Fe(3+)</name>
        <dbReference type="ChEBI" id="CHEBI:29034"/>
        <label>1</label>
    </ligand>
</feature>
<feature type="binding site" evidence="5">
    <location>
        <position position="136"/>
    </location>
    <ligand>
        <name>hydrogencarbonate</name>
        <dbReference type="ChEBI" id="CHEBI:17544"/>
        <label>1</label>
    </ligand>
</feature>
<feature type="binding site" evidence="5">
    <location>
        <position position="140"/>
    </location>
    <ligand>
        <name>hydrogencarbonate</name>
        <dbReference type="ChEBI" id="CHEBI:17544"/>
        <label>1</label>
    </ligand>
</feature>
<feature type="binding site" evidence="5">
    <location>
        <position position="142"/>
    </location>
    <ligand>
        <name>hydrogencarbonate</name>
        <dbReference type="ChEBI" id="CHEBI:17544"/>
        <label>1</label>
    </ligand>
</feature>
<feature type="binding site" evidence="5">
    <location>
        <position position="143"/>
    </location>
    <ligand>
        <name>hydrogencarbonate</name>
        <dbReference type="ChEBI" id="CHEBI:17544"/>
        <label>1</label>
    </ligand>
</feature>
<feature type="binding site" evidence="5">
    <location>
        <position position="209"/>
    </location>
    <ligand>
        <name>Fe(3+)</name>
        <dbReference type="ChEBI" id="CHEBI:29034"/>
        <label>1</label>
    </ligand>
</feature>
<feature type="binding site" evidence="5">
    <location>
        <position position="270"/>
    </location>
    <ligand>
        <name>Fe(3+)</name>
        <dbReference type="ChEBI" id="CHEBI:29034"/>
        <label>1</label>
    </ligand>
</feature>
<feature type="binding site" evidence="5">
    <location>
        <position position="413"/>
    </location>
    <ligand>
        <name>Fe(3+)</name>
        <dbReference type="ChEBI" id="CHEBI:29034"/>
        <label>2</label>
    </ligand>
</feature>
<feature type="binding site" evidence="5">
    <location>
        <position position="449"/>
    </location>
    <ligand>
        <name>Fe(3+)</name>
        <dbReference type="ChEBI" id="CHEBI:29034"/>
        <label>2</label>
    </ligand>
</feature>
<feature type="binding site" evidence="5">
    <location>
        <position position="476"/>
    </location>
    <ligand>
        <name>hydrogencarbonate</name>
        <dbReference type="ChEBI" id="CHEBI:17544"/>
        <label>2</label>
    </ligand>
</feature>
<feature type="binding site" evidence="5">
    <location>
        <position position="480"/>
    </location>
    <ligand>
        <name>hydrogencarbonate</name>
        <dbReference type="ChEBI" id="CHEBI:17544"/>
        <label>2</label>
    </ligand>
</feature>
<feature type="binding site" evidence="5">
    <location>
        <position position="482"/>
    </location>
    <ligand>
        <name>hydrogencarbonate</name>
        <dbReference type="ChEBI" id="CHEBI:17544"/>
        <label>2</label>
    </ligand>
</feature>
<feature type="binding site" evidence="5">
    <location>
        <position position="483"/>
    </location>
    <ligand>
        <name>hydrogencarbonate</name>
        <dbReference type="ChEBI" id="CHEBI:17544"/>
        <label>2</label>
    </ligand>
</feature>
<feature type="binding site" evidence="5">
    <location>
        <position position="544"/>
    </location>
    <ligand>
        <name>Fe(3+)</name>
        <dbReference type="ChEBI" id="CHEBI:29034"/>
        <label>2</label>
    </ligand>
</feature>
<feature type="binding site" evidence="5">
    <location>
        <position position="612"/>
    </location>
    <ligand>
        <name>Fe(3+)</name>
        <dbReference type="ChEBI" id="CHEBI:29034"/>
        <label>2</label>
    </ligand>
</feature>
<feature type="modified residue" description="Dimethylated arginine" evidence="3">
    <location>
        <position position="40"/>
    </location>
</feature>
<feature type="modified residue" description="Phosphoserine" evidence="2">
    <location>
        <position position="391"/>
    </location>
</feature>
<feature type="modified residue" description="Phosphoserine" evidence="2">
    <location>
        <position position="693"/>
    </location>
</feature>
<feature type="glycosylation site" description="N-linked (GlcNAc...) asparagine" evidence="4">
    <location>
        <position position="515"/>
    </location>
</feature>
<feature type="disulfide bond" evidence="5">
    <location>
        <begin position="26"/>
        <end position="64"/>
    </location>
</feature>
<feature type="disulfide bond" evidence="5">
    <location>
        <begin position="36"/>
        <end position="55"/>
    </location>
</feature>
<feature type="disulfide bond" evidence="5">
    <location>
        <begin position="134"/>
        <end position="215"/>
    </location>
</feature>
<feature type="disulfide bond" evidence="5">
    <location>
        <begin position="174"/>
        <end position="190"/>
    </location>
</feature>
<feature type="disulfide bond" evidence="5">
    <location>
        <begin position="177"/>
        <end position="198"/>
    </location>
</feature>
<feature type="disulfide bond" evidence="5">
    <location>
        <begin position="187"/>
        <end position="200"/>
    </location>
</feature>
<feature type="disulfide bond" evidence="5">
    <location>
        <begin position="248"/>
        <end position="262"/>
    </location>
</feature>
<feature type="disulfide bond" evidence="5">
    <location>
        <begin position="360"/>
        <end position="623"/>
    </location>
</feature>
<feature type="disulfide bond" evidence="5">
    <location>
        <begin position="366"/>
        <end position="398"/>
    </location>
</feature>
<feature type="disulfide bond" evidence="5">
    <location>
        <begin position="376"/>
        <end position="389"/>
    </location>
</feature>
<feature type="disulfide bond" evidence="5">
    <location>
        <begin position="423"/>
        <end position="701"/>
    </location>
</feature>
<feature type="disulfide bond" evidence="5">
    <location>
        <begin position="441"/>
        <end position="664"/>
    </location>
</feature>
<feature type="disulfide bond" evidence="5">
    <location>
        <begin position="474"/>
        <end position="550"/>
    </location>
</feature>
<feature type="disulfide bond" evidence="5">
    <location>
        <begin position="498"/>
        <end position="692"/>
    </location>
</feature>
<feature type="disulfide bond" evidence="5">
    <location>
        <begin position="508"/>
        <end position="522"/>
    </location>
</feature>
<feature type="disulfide bond" evidence="5">
    <location>
        <begin position="519"/>
        <end position="533"/>
    </location>
</feature>
<feature type="disulfide bond" evidence="5">
    <location>
        <begin position="590"/>
        <end position="604"/>
    </location>
</feature>
<feature type="disulfide bond" evidence="5">
    <location>
        <begin position="642"/>
        <end position="647"/>
    </location>
</feature>